<dbReference type="EMBL" id="DP000178">
    <property type="protein sequence ID" value="ABI75281.1"/>
    <property type="molecule type" value="Genomic_DNA"/>
</dbReference>
<dbReference type="SMR" id="Q09YJ9"/>
<dbReference type="GO" id="GO:0030863">
    <property type="term" value="C:cortical cytoskeleton"/>
    <property type="evidence" value="ECO:0007669"/>
    <property type="project" value="TreeGrafter"/>
</dbReference>
<dbReference type="GO" id="GO:0008290">
    <property type="term" value="C:F-actin capping protein complex"/>
    <property type="evidence" value="ECO:0007669"/>
    <property type="project" value="InterPro"/>
</dbReference>
<dbReference type="GO" id="GO:0051015">
    <property type="term" value="F:actin filament binding"/>
    <property type="evidence" value="ECO:0007669"/>
    <property type="project" value="TreeGrafter"/>
</dbReference>
<dbReference type="GO" id="GO:0030036">
    <property type="term" value="P:actin cytoskeleton organization"/>
    <property type="evidence" value="ECO:0007669"/>
    <property type="project" value="TreeGrafter"/>
</dbReference>
<dbReference type="GO" id="GO:0051016">
    <property type="term" value="P:barbed-end actin filament capping"/>
    <property type="evidence" value="ECO:0007669"/>
    <property type="project" value="InterPro"/>
</dbReference>
<dbReference type="FunFam" id="3.30.1140.60:FF:000001">
    <property type="entry name" value="F-actin-capping protein subunit alpha"/>
    <property type="match status" value="1"/>
</dbReference>
<dbReference type="FunFam" id="3.90.1150.210:FF:000002">
    <property type="entry name" value="F-actin-capping protein subunit alpha"/>
    <property type="match status" value="1"/>
</dbReference>
<dbReference type="Gene3D" id="3.30.1140.60">
    <property type="entry name" value="F-actin capping protein, alpha subunit"/>
    <property type="match status" value="1"/>
</dbReference>
<dbReference type="Gene3D" id="3.90.1150.210">
    <property type="entry name" value="F-actin capping protein, beta subunit"/>
    <property type="match status" value="1"/>
</dbReference>
<dbReference type="InterPro" id="IPR002189">
    <property type="entry name" value="CapZ_alpha"/>
</dbReference>
<dbReference type="InterPro" id="IPR037282">
    <property type="entry name" value="CapZ_alpha/beta"/>
</dbReference>
<dbReference type="InterPro" id="IPR042276">
    <property type="entry name" value="CapZ_alpha/beta_2"/>
</dbReference>
<dbReference type="InterPro" id="IPR042489">
    <property type="entry name" value="CapZ_alpha_1"/>
</dbReference>
<dbReference type="InterPro" id="IPR017865">
    <property type="entry name" value="F-actin_cap_asu_CS"/>
</dbReference>
<dbReference type="PANTHER" id="PTHR10653">
    <property type="entry name" value="F-ACTIN-CAPPING PROTEIN SUBUNIT ALPHA"/>
    <property type="match status" value="1"/>
</dbReference>
<dbReference type="PANTHER" id="PTHR10653:SF2">
    <property type="entry name" value="F-ACTIN-CAPPING PROTEIN SUBUNIT ALPHA-2"/>
    <property type="match status" value="1"/>
</dbReference>
<dbReference type="Pfam" id="PF01267">
    <property type="entry name" value="F-actin_cap_A"/>
    <property type="match status" value="1"/>
</dbReference>
<dbReference type="PRINTS" id="PR00191">
    <property type="entry name" value="FACTINCAPA"/>
</dbReference>
<dbReference type="SUPFAM" id="SSF90096">
    <property type="entry name" value="Subunits of heterodimeric actin filament capping protein Capz"/>
    <property type="match status" value="1"/>
</dbReference>
<dbReference type="PROSITE" id="PS00748">
    <property type="entry name" value="F_ACTIN_CAPPING_A_1"/>
    <property type="match status" value="1"/>
</dbReference>
<dbReference type="PROSITE" id="PS00749">
    <property type="entry name" value="F_ACTIN_CAPPING_A_2"/>
    <property type="match status" value="1"/>
</dbReference>
<name>CAZA2_MUNMU</name>
<comment type="function">
    <text evidence="1">F-actin-capping proteins bind in a Ca(2+)-independent manner to the fast growing ends of actin filaments (barbed end) thereby blocking the exchange of subunits at these ends. Unlike other capping proteins (such as gelsolin and severin), these proteins do not sever actin filaments (By similarity).</text>
</comment>
<comment type="subunit">
    <text evidence="1 2">Component of the F-actin capping complex, composed of a heterodimer of an alpha and a beta subunit. Component of the WASH complex, composed of F-actin-capping protein subunit alpha (CAPZA1, CAPZA2 or CAPZA3), F-actin-capping protein subunit beta (CAPZB), WASHC1, WASHC2, WASHC3, WASHC4 and WASHC5. Interacts with RCSD1/CAPZIP (By similarity). Directly interacts with CRACD; this interaction decreases binding to actin (By similarity).</text>
</comment>
<comment type="similarity">
    <text evidence="3">Belongs to the F-actin-capping protein alpha subunit family.</text>
</comment>
<evidence type="ECO:0000250" key="1"/>
<evidence type="ECO:0000250" key="2">
    <source>
        <dbReference type="UniProtKB" id="P47755"/>
    </source>
</evidence>
<evidence type="ECO:0000305" key="3"/>
<protein>
    <recommendedName>
        <fullName>F-actin-capping protein subunit alpha-2</fullName>
    </recommendedName>
    <alternativeName>
        <fullName>CapZ alpha-2</fullName>
    </alternativeName>
</protein>
<feature type="initiator methionine" description="Removed" evidence="2">
    <location>
        <position position="1"/>
    </location>
</feature>
<feature type="chain" id="PRO_0000260357" description="F-actin-capping protein subunit alpha-2">
    <location>
        <begin position="2"/>
        <end position="286"/>
    </location>
</feature>
<feature type="modified residue" description="N-acetylalanine" evidence="2">
    <location>
        <position position="2"/>
    </location>
</feature>
<feature type="modified residue" description="Phosphoserine" evidence="2">
    <location>
        <position position="9"/>
    </location>
</feature>
<accession>Q09YJ9</accession>
<keyword id="KW-0007">Acetylation</keyword>
<keyword id="KW-0117">Actin capping</keyword>
<keyword id="KW-0009">Actin-binding</keyword>
<keyword id="KW-0597">Phosphoprotein</keyword>
<sequence length="286" mass="32979">MADLEEQLSDEEKVRIAAKFIIHAPPGEFNEVFNDVRLLLNNDNLLREGAAHAFAQYNLDQFTPVKIEGYEDQVLITEHGDLGNGKFLDPKNRISFKFDHLRKEATDPRPYEAENAIESWRTSVETALRAYVKEHYPNGVCTVYGKKIDGQQTIIACIESHQFQAKNFWNGRWRSEWKFTITPSTTQVVGILKIQVHYYEDGNVQLVSHKDIQDSLTVSNEVQTAKEFIKIVEAAENEYQTAISENYQTMSDTTFKALRRQLPVTRTKIDWNKILSYKIGKEMQNA</sequence>
<gene>
    <name type="primary">CAPZA2</name>
</gene>
<proteinExistence type="inferred from homology"/>
<organism>
    <name type="scientific">Muntiacus muntjak</name>
    <name type="common">Barking deer</name>
    <name type="synonym">Indian muntjac</name>
    <dbReference type="NCBI Taxonomy" id="9888"/>
    <lineage>
        <taxon>Eukaryota</taxon>
        <taxon>Metazoa</taxon>
        <taxon>Chordata</taxon>
        <taxon>Craniata</taxon>
        <taxon>Vertebrata</taxon>
        <taxon>Euteleostomi</taxon>
        <taxon>Mammalia</taxon>
        <taxon>Eutheria</taxon>
        <taxon>Laurasiatheria</taxon>
        <taxon>Artiodactyla</taxon>
        <taxon>Ruminantia</taxon>
        <taxon>Pecora</taxon>
        <taxon>Cervidae</taxon>
        <taxon>Muntiacinae</taxon>
        <taxon>Muntiacus</taxon>
    </lineage>
</organism>
<reference key="1">
    <citation type="submission" date="2006-09" db="EMBL/GenBank/DDBJ databases">
        <title>NISC comparative sequencing initiative.</title>
        <authorList>
            <person name="Antonellis A."/>
            <person name="Ayele K."/>
            <person name="Benjamin B."/>
            <person name="Blakesley R.W."/>
            <person name="Boakye A."/>
            <person name="Bouffard G.G."/>
            <person name="Brinkley C."/>
            <person name="Brooks S."/>
            <person name="Chu G."/>
            <person name="Coleman H."/>
            <person name="Engle J."/>
            <person name="Gestole M."/>
            <person name="Greene A."/>
            <person name="Guan X."/>
            <person name="Gupta J."/>
            <person name="Haghighi P."/>
            <person name="Han J."/>
            <person name="Hansen N."/>
            <person name="Ho S.-L."/>
            <person name="Hu P."/>
            <person name="Hunter G."/>
            <person name="Hurle B."/>
            <person name="Idol J.R."/>
            <person name="Kwong P."/>
            <person name="Laric P."/>
            <person name="Larson S."/>
            <person name="Lee-Lin S.-Q."/>
            <person name="Legaspi R."/>
            <person name="Madden M."/>
            <person name="Maduro Q.L."/>
            <person name="Maduro V.B."/>
            <person name="Margulies E.H."/>
            <person name="Masiello C."/>
            <person name="Maskeri B."/>
            <person name="McDowell J."/>
            <person name="Mojidi H.A."/>
            <person name="Mullikin J.C."/>
            <person name="Oestreicher J.S."/>
            <person name="Park M."/>
            <person name="Portnoy M.E."/>
            <person name="Prasad A."/>
            <person name="Puri O."/>
            <person name="Reddix-Dugue N."/>
            <person name="Schandler K."/>
            <person name="Schueler M.G."/>
            <person name="Sison C."/>
            <person name="Stantripop S."/>
            <person name="Stephen E."/>
            <person name="Taye A."/>
            <person name="Thomas J.W."/>
            <person name="Thomas P.J."/>
            <person name="Tsipouri V."/>
            <person name="Ung L."/>
            <person name="Vogt J.L."/>
            <person name="Wetherby K.D."/>
            <person name="Young A."/>
            <person name="Green E.D."/>
        </authorList>
    </citation>
    <scope>NUCLEOTIDE SEQUENCE [LARGE SCALE GENOMIC DNA]</scope>
</reference>